<organism>
    <name type="scientific">Drosophila pseudoobscura pseudoobscura</name>
    <name type="common">Fruit fly</name>
    <dbReference type="NCBI Taxonomy" id="46245"/>
    <lineage>
        <taxon>Eukaryota</taxon>
        <taxon>Metazoa</taxon>
        <taxon>Ecdysozoa</taxon>
        <taxon>Arthropoda</taxon>
        <taxon>Hexapoda</taxon>
        <taxon>Insecta</taxon>
        <taxon>Pterygota</taxon>
        <taxon>Neoptera</taxon>
        <taxon>Endopterygota</taxon>
        <taxon>Diptera</taxon>
        <taxon>Brachycera</taxon>
        <taxon>Muscomorpha</taxon>
        <taxon>Ephydroidea</taxon>
        <taxon>Drosophilidae</taxon>
        <taxon>Drosophila</taxon>
        <taxon>Sophophora</taxon>
    </lineage>
</organism>
<keyword id="KW-0027">Amidation</keyword>
<keyword id="KW-0165">Cleavage on pair of basic residues</keyword>
<keyword id="KW-0222">Digestion</keyword>
<keyword id="KW-0372">Hormone</keyword>
<keyword id="KW-0527">Neuropeptide</keyword>
<keyword id="KW-1185">Reference proteome</keyword>
<keyword id="KW-0964">Secreted</keyword>
<keyword id="KW-0732">Signal</keyword>
<reference key="1">
    <citation type="journal article" date="2005" name="Genome Res.">
        <title>Comparative genome sequencing of Drosophila pseudoobscura: chromosomal, gene, and cis-element evolution.</title>
        <authorList>
            <person name="Richards S."/>
            <person name="Liu Y."/>
            <person name="Bettencourt B.R."/>
            <person name="Hradecky P."/>
            <person name="Letovsky S."/>
            <person name="Nielsen R."/>
            <person name="Thornton K."/>
            <person name="Hubisz M.J."/>
            <person name="Chen R."/>
            <person name="Meisel R.P."/>
            <person name="Couronne O."/>
            <person name="Hua S."/>
            <person name="Smith M.A."/>
            <person name="Zhang P."/>
            <person name="Liu J."/>
            <person name="Bussemaker H.J."/>
            <person name="van Batenburg M.F."/>
            <person name="Howells S.L."/>
            <person name="Scherer S.E."/>
            <person name="Sodergren E."/>
            <person name="Matthews B.B."/>
            <person name="Crosby M.A."/>
            <person name="Schroeder A.J."/>
            <person name="Ortiz-Barrientos D."/>
            <person name="Rives C.M."/>
            <person name="Metzker M.L."/>
            <person name="Muzny D.M."/>
            <person name="Scott G."/>
            <person name="Steffen D."/>
            <person name="Wheeler D.A."/>
            <person name="Worley K.C."/>
            <person name="Havlak P."/>
            <person name="Durbin K.J."/>
            <person name="Egan A."/>
            <person name="Gill R."/>
            <person name="Hume J."/>
            <person name="Morgan M.B."/>
            <person name="Miner G."/>
            <person name="Hamilton C."/>
            <person name="Huang Y."/>
            <person name="Waldron L."/>
            <person name="Verduzco D."/>
            <person name="Clerc-Blankenburg K.P."/>
            <person name="Dubchak I."/>
            <person name="Noor M.A.F."/>
            <person name="Anderson W."/>
            <person name="White K.P."/>
            <person name="Clark A.G."/>
            <person name="Schaeffer S.W."/>
            <person name="Gelbart W.M."/>
            <person name="Weinstock G.M."/>
            <person name="Gibbs R.A."/>
        </authorList>
    </citation>
    <scope>NUCLEOTIDE SEQUENCE [LARGE SCALE GENOMIC DNA]</scope>
    <source>
        <strain>MV2-25 / Tucson 14011-0121.94</strain>
    </source>
</reference>
<sequence length="102" mass="11461">MSNTMRCILIVCVALTLIAAGCNVEASNSRPPRKNDVNTMADAYKFLQDLDTYYGDRARVRFGKRGGPLMEMLRNRELENNMAKSINSGGELIRALDEEEVF</sequence>
<proteinExistence type="inferred from homology"/>
<dbReference type="EMBL" id="CM000070">
    <property type="protein sequence ID" value="EAL27144.2"/>
    <property type="molecule type" value="Genomic_DNA"/>
</dbReference>
<dbReference type="RefSeq" id="XP_001358007.2">
    <property type="nucleotide sequence ID" value="XM_001357970.3"/>
</dbReference>
<dbReference type="SMR" id="Q29B55"/>
<dbReference type="FunCoup" id="Q29B55">
    <property type="interactions" value="43"/>
</dbReference>
<dbReference type="STRING" id="46245.Q29B55"/>
<dbReference type="EnsemblMetazoa" id="FBtr0284200">
    <property type="protein sequence ID" value="FBpp0282638"/>
    <property type="gene ID" value="FBgn0070316"/>
</dbReference>
<dbReference type="GeneID" id="4800796"/>
<dbReference type="KEGG" id="dpo:4800796"/>
<dbReference type="CTD" id="42018"/>
<dbReference type="eggNOG" id="ENOG502T6VN">
    <property type="taxonomic scope" value="Eukaryota"/>
</dbReference>
<dbReference type="HOGENOM" id="CLU_2294604_0_0_1"/>
<dbReference type="InParanoid" id="Q29B55"/>
<dbReference type="OMA" id="CIVEASK"/>
<dbReference type="Proteomes" id="UP000001819">
    <property type="component" value="Chromosome 2"/>
</dbReference>
<dbReference type="Bgee" id="FBgn0070316">
    <property type="expression patterns" value="Expressed in insect adult head and 1 other cell type or tissue"/>
</dbReference>
<dbReference type="GO" id="GO:0005576">
    <property type="term" value="C:extracellular region"/>
    <property type="evidence" value="ECO:0000250"/>
    <property type="project" value="UniProtKB"/>
</dbReference>
<dbReference type="GO" id="GO:0005184">
    <property type="term" value="F:neuropeptide hormone activity"/>
    <property type="evidence" value="ECO:0000250"/>
    <property type="project" value="UniProtKB"/>
</dbReference>
<dbReference type="GO" id="GO:0007586">
    <property type="term" value="P:digestion"/>
    <property type="evidence" value="ECO:0007669"/>
    <property type="project" value="UniProtKB-KW"/>
</dbReference>
<dbReference type="GO" id="GO:0030536">
    <property type="term" value="P:larval feeding behavior"/>
    <property type="evidence" value="ECO:0000250"/>
    <property type="project" value="UniProtKB"/>
</dbReference>
<dbReference type="GO" id="GO:0035177">
    <property type="term" value="P:larval foraging behavior"/>
    <property type="evidence" value="ECO:0000250"/>
    <property type="project" value="UniProtKB"/>
</dbReference>
<dbReference type="GO" id="GO:0007218">
    <property type="term" value="P:neuropeptide signaling pathway"/>
    <property type="evidence" value="ECO:0007669"/>
    <property type="project" value="UniProtKB-KW"/>
</dbReference>
<dbReference type="GO" id="GO:0032095">
    <property type="term" value="P:regulation of response to food"/>
    <property type="evidence" value="ECO:0000250"/>
    <property type="project" value="UniProtKB"/>
</dbReference>
<dbReference type="GO" id="GO:0035176">
    <property type="term" value="P:social behavior"/>
    <property type="evidence" value="ECO:0000250"/>
    <property type="project" value="UniProtKB"/>
</dbReference>
<accession>Q29B55</accession>
<evidence type="ECO:0000250" key="1"/>
<evidence type="ECO:0000250" key="2">
    <source>
        <dbReference type="UniProtKB" id="Q8MP00"/>
    </source>
</evidence>
<evidence type="ECO:0000250" key="3">
    <source>
        <dbReference type="UniProtKB" id="Q9VET0"/>
    </source>
</evidence>
<evidence type="ECO:0000255" key="4"/>
<name>NPF_DROPS</name>
<feature type="signal peptide" evidence="4">
    <location>
        <begin position="1"/>
        <end position="29"/>
    </location>
</feature>
<feature type="propeptide" id="PRO_0000283082" evidence="3">
    <location>
        <begin position="30"/>
        <end position="32"/>
    </location>
</feature>
<feature type="peptide" id="PRO_0000283083" description="Neuropeptide F" evidence="3">
    <location>
        <begin position="35"/>
        <end position="62"/>
    </location>
</feature>
<feature type="propeptide" id="PRO_0000283084" evidence="1">
    <location>
        <begin position="66"/>
        <end position="102"/>
    </location>
</feature>
<feature type="modified residue" description="Phenylalanine amide" evidence="1">
    <location>
        <position position="62"/>
    </location>
</feature>
<gene>
    <name evidence="3" type="primary">npf</name>
    <name type="ORF">GA10258</name>
</gene>
<comment type="function">
    <text evidence="2 3">An integral part of the sensory system that mediates food signaling, providing the neural basis for the regulation of food response; coordinates larval foraging and social behavior changes during development. May have a hormonal role in females (By similarity).</text>
</comment>
<comment type="subcellular location">
    <subcellularLocation>
        <location evidence="1">Secreted</location>
    </subcellularLocation>
</comment>
<comment type="similarity">
    <text evidence="4">Belongs to the NPY family.</text>
</comment>
<protein>
    <recommendedName>
        <fullName>Neuropeptide F</fullName>
        <shortName>NPF</shortName>
    </recommendedName>
</protein>